<proteinExistence type="predicted"/>
<gene>
    <name type="ORF">ORF53a</name>
</gene>
<dbReference type="EMBL" id="EF432053">
    <property type="protein sequence ID" value="ABP73399.1"/>
    <property type="molecule type" value="Genomic_DNA"/>
</dbReference>
<dbReference type="SMR" id="A4ZU95"/>
<dbReference type="KEGG" id="vg:5129824"/>
<dbReference type="Proteomes" id="UP000000513">
    <property type="component" value="Segment"/>
</dbReference>
<dbReference type="GO" id="GO:0033644">
    <property type="term" value="C:host cell membrane"/>
    <property type="evidence" value="ECO:0007669"/>
    <property type="project" value="UniProtKB-SubCell"/>
</dbReference>
<dbReference type="GO" id="GO:0016020">
    <property type="term" value="C:membrane"/>
    <property type="evidence" value="ECO:0007669"/>
    <property type="project" value="UniProtKB-KW"/>
</dbReference>
<reference key="1">
    <citation type="journal article" date="2007" name="Virology">
        <title>Genome of the Acidianus bottle-shaped virus and insights into the replication and packaging mechanisms.</title>
        <authorList>
            <person name="Peng X."/>
            <person name="Basta T."/>
            <person name="Haring M."/>
            <person name="Garrett R.A."/>
            <person name="Prangishvili D."/>
        </authorList>
    </citation>
    <scope>NUCLEOTIDE SEQUENCE [GENOMIC DNA]</scope>
</reference>
<sequence length="53" mass="6139">MSLLLLTDVDLLINLILLFQKKLSLKEAIVFSLAVFGIVEAYYYWKNRSSESE</sequence>
<organismHost>
    <name type="scientific">Acidianus convivator</name>
    <dbReference type="NCBI Taxonomy" id="269667"/>
</organismHost>
<comment type="subcellular location">
    <subcellularLocation>
        <location evidence="2">Host membrane</location>
        <topology evidence="2">Single-pass membrane protein</topology>
    </subcellularLocation>
</comment>
<keyword id="KW-1043">Host membrane</keyword>
<keyword id="KW-0472">Membrane</keyword>
<keyword id="KW-1185">Reference proteome</keyword>
<keyword id="KW-0812">Transmembrane</keyword>
<keyword id="KW-1133">Transmembrane helix</keyword>
<organism>
    <name type="scientific">Acidianus bottle-shaped virus (isolate Italy/Pozzuoli)</name>
    <name type="common">ABV</name>
    <dbReference type="NCBI Taxonomy" id="654911"/>
    <lineage>
        <taxon>Viruses</taxon>
        <taxon>Viruses incertae sedis</taxon>
        <taxon>Ampullaviridae</taxon>
        <taxon>Bottigliavirus</taxon>
        <taxon>Bottigliavirus ABV</taxon>
    </lineage>
</organism>
<feature type="chain" id="PRO_0000384823" description="Uncharacterized protein ORF53a">
    <location>
        <begin position="1"/>
        <end position="53"/>
    </location>
</feature>
<feature type="transmembrane region" description="Helical" evidence="1">
    <location>
        <begin position="28"/>
        <end position="45"/>
    </location>
</feature>
<evidence type="ECO:0000255" key="1"/>
<evidence type="ECO:0000305" key="2"/>
<name>Y053A_ABVP</name>
<protein>
    <recommendedName>
        <fullName>Uncharacterized protein ORF53a</fullName>
    </recommendedName>
</protein>
<accession>A4ZU95</accession>